<accession>Q80TT8</accession>
<accession>Q8BKL9</accession>
<accession>Q8CGC0</accession>
<accession>Q8R363</accession>
<accession>S4R1Y1</accession>
<organism>
    <name type="scientific">Mus musculus</name>
    <name type="common">Mouse</name>
    <dbReference type="NCBI Taxonomy" id="10090"/>
    <lineage>
        <taxon>Eukaryota</taxon>
        <taxon>Metazoa</taxon>
        <taxon>Chordata</taxon>
        <taxon>Craniata</taxon>
        <taxon>Vertebrata</taxon>
        <taxon>Euteleostomi</taxon>
        <taxon>Mammalia</taxon>
        <taxon>Eutheria</taxon>
        <taxon>Euarchontoglires</taxon>
        <taxon>Glires</taxon>
        <taxon>Rodentia</taxon>
        <taxon>Myomorpha</taxon>
        <taxon>Muroidea</taxon>
        <taxon>Muridae</taxon>
        <taxon>Murinae</taxon>
        <taxon>Mus</taxon>
        <taxon>Mus</taxon>
    </lineage>
</organism>
<feature type="chain" id="PRO_0000119816" description="Cullin-9">
    <location>
        <begin position="1"/>
        <end position="2530"/>
    </location>
</feature>
<feature type="domain" description="CPH" evidence="2">
    <location>
        <begin position="367"/>
        <end position="440"/>
    </location>
</feature>
<feature type="domain" description="DOC" evidence="4">
    <location>
        <begin position="1145"/>
        <end position="1324"/>
    </location>
</feature>
<feature type="zinc finger region" description="RING-type 1" evidence="5">
    <location>
        <begin position="2074"/>
        <end position="2124"/>
    </location>
</feature>
<feature type="zinc finger region" description="IBR-type" evidence="5">
    <location>
        <begin position="2144"/>
        <end position="2207"/>
    </location>
</feature>
<feature type="zinc finger region" description="RING-type 2; atypical" evidence="5">
    <location>
        <begin position="2240"/>
        <end position="2269"/>
    </location>
</feature>
<feature type="region of interest" description="Disordered" evidence="6">
    <location>
        <begin position="585"/>
        <end position="639"/>
    </location>
</feature>
<feature type="region of interest" description="Disordered" evidence="6">
    <location>
        <begin position="930"/>
        <end position="951"/>
    </location>
</feature>
<feature type="region of interest" description="Disordered" evidence="6">
    <location>
        <begin position="1435"/>
        <end position="1468"/>
    </location>
</feature>
<feature type="region of interest" description="Disordered" evidence="6">
    <location>
        <begin position="1667"/>
        <end position="1690"/>
    </location>
</feature>
<feature type="region of interest" description="TRIAD supradomain" evidence="5">
    <location>
        <begin position="2070"/>
        <end position="2287"/>
    </location>
</feature>
<feature type="region of interest" description="Disordered" evidence="6">
    <location>
        <begin position="2443"/>
        <end position="2530"/>
    </location>
</feature>
<feature type="coiled-coil region" evidence="2">
    <location>
        <begin position="2459"/>
        <end position="2500"/>
    </location>
</feature>
<feature type="compositionally biased region" description="Polar residues" evidence="6">
    <location>
        <begin position="940"/>
        <end position="949"/>
    </location>
</feature>
<feature type="compositionally biased region" description="Polar residues" evidence="6">
    <location>
        <begin position="2452"/>
        <end position="2462"/>
    </location>
</feature>
<feature type="compositionally biased region" description="Acidic residues" evidence="6">
    <location>
        <begin position="2465"/>
        <end position="2510"/>
    </location>
</feature>
<feature type="compositionally biased region" description="Acidic residues" evidence="6">
    <location>
        <begin position="2520"/>
        <end position="2530"/>
    </location>
</feature>
<feature type="active site" evidence="5">
    <location>
        <position position="2253"/>
    </location>
</feature>
<feature type="binding site" evidence="2">
    <location>
        <begin position="1365"/>
        <end position="1372"/>
    </location>
    <ligand>
        <name>ATP</name>
        <dbReference type="ChEBI" id="CHEBI:30616"/>
    </ligand>
</feature>
<feature type="binding site" evidence="5">
    <location>
        <position position="2074"/>
    </location>
    <ligand>
        <name>Zn(2+)</name>
        <dbReference type="ChEBI" id="CHEBI:29105"/>
        <label>1</label>
    </ligand>
</feature>
<feature type="binding site" evidence="5">
    <location>
        <position position="2077"/>
    </location>
    <ligand>
        <name>Zn(2+)</name>
        <dbReference type="ChEBI" id="CHEBI:29105"/>
        <label>1</label>
    </ligand>
</feature>
<feature type="binding site" evidence="5">
    <location>
        <position position="2092"/>
    </location>
    <ligand>
        <name>Zn(2+)</name>
        <dbReference type="ChEBI" id="CHEBI:29105"/>
        <label>2</label>
    </ligand>
</feature>
<feature type="binding site" evidence="5">
    <location>
        <position position="2094"/>
    </location>
    <ligand>
        <name>Zn(2+)</name>
        <dbReference type="ChEBI" id="CHEBI:29105"/>
        <label>2</label>
    </ligand>
</feature>
<feature type="binding site" evidence="5">
    <location>
        <position position="2097"/>
    </location>
    <ligand>
        <name>Zn(2+)</name>
        <dbReference type="ChEBI" id="CHEBI:29105"/>
        <label>1</label>
    </ligand>
</feature>
<feature type="binding site" evidence="5">
    <location>
        <position position="2100"/>
    </location>
    <ligand>
        <name>Zn(2+)</name>
        <dbReference type="ChEBI" id="CHEBI:29105"/>
        <label>1</label>
    </ligand>
</feature>
<feature type="binding site" evidence="5">
    <location>
        <position position="2119"/>
    </location>
    <ligand>
        <name>Zn(2+)</name>
        <dbReference type="ChEBI" id="CHEBI:29105"/>
        <label>2</label>
    </ligand>
</feature>
<feature type="binding site" evidence="5">
    <location>
        <position position="2124"/>
    </location>
    <ligand>
        <name>Zn(2+)</name>
        <dbReference type="ChEBI" id="CHEBI:29105"/>
        <label>2</label>
    </ligand>
</feature>
<feature type="binding site" evidence="5">
    <location>
        <position position="2164"/>
    </location>
    <ligand>
        <name>Zn(2+)</name>
        <dbReference type="ChEBI" id="CHEBI:29105"/>
        <label>3</label>
    </ligand>
</feature>
<feature type="binding site" evidence="5">
    <location>
        <position position="2170"/>
    </location>
    <ligand>
        <name>Zn(2+)</name>
        <dbReference type="ChEBI" id="CHEBI:29105"/>
        <label>3</label>
    </ligand>
</feature>
<feature type="binding site" evidence="5">
    <location>
        <position position="2185"/>
    </location>
    <ligand>
        <name>Zn(2+)</name>
        <dbReference type="ChEBI" id="CHEBI:29105"/>
        <label>3</label>
    </ligand>
</feature>
<feature type="binding site" evidence="5">
    <location>
        <position position="2188"/>
    </location>
    <ligand>
        <name>Zn(2+)</name>
        <dbReference type="ChEBI" id="CHEBI:29105"/>
        <label>3</label>
    </ligand>
</feature>
<feature type="binding site" evidence="5">
    <location>
        <position position="2193"/>
    </location>
    <ligand>
        <name>Zn(2+)</name>
        <dbReference type="ChEBI" id="CHEBI:29105"/>
        <label>4</label>
    </ligand>
</feature>
<feature type="binding site" evidence="5">
    <location>
        <position position="2196"/>
    </location>
    <ligand>
        <name>Zn(2+)</name>
        <dbReference type="ChEBI" id="CHEBI:29105"/>
        <label>4</label>
    </ligand>
</feature>
<feature type="binding site" evidence="5">
    <location>
        <position position="2202"/>
    </location>
    <ligand>
        <name>Zn(2+)</name>
        <dbReference type="ChEBI" id="CHEBI:29105"/>
        <label>4</label>
    </ligand>
</feature>
<feature type="binding site" evidence="5">
    <location>
        <position position="2207"/>
    </location>
    <ligand>
        <name>Zn(2+)</name>
        <dbReference type="ChEBI" id="CHEBI:29105"/>
        <label>4</label>
    </ligand>
</feature>
<feature type="binding site" evidence="5">
    <location>
        <position position="2240"/>
    </location>
    <ligand>
        <name>Zn(2+)</name>
        <dbReference type="ChEBI" id="CHEBI:29105"/>
        <label>5</label>
    </ligand>
</feature>
<feature type="binding site" evidence="5">
    <location>
        <position position="2243"/>
    </location>
    <ligand>
        <name>Zn(2+)</name>
        <dbReference type="ChEBI" id="CHEBI:29105"/>
        <label>5</label>
    </ligand>
</feature>
<feature type="binding site" evidence="5">
    <location>
        <position position="2258"/>
    </location>
    <ligand>
        <name>Zn(2+)</name>
        <dbReference type="ChEBI" id="CHEBI:29105"/>
        <label>5</label>
    </ligand>
</feature>
<feature type="binding site" evidence="5">
    <location>
        <position position="2261"/>
    </location>
    <ligand>
        <name>Zn(2+)</name>
        <dbReference type="ChEBI" id="CHEBI:29105"/>
        <label>5</label>
    </ligand>
</feature>
<feature type="binding site" evidence="5">
    <location>
        <position position="2266"/>
    </location>
    <ligand>
        <name>Zn(2+)</name>
        <dbReference type="ChEBI" id="CHEBI:29105"/>
        <label>6</label>
    </ligand>
</feature>
<feature type="binding site" evidence="5">
    <location>
        <position position="2269"/>
    </location>
    <ligand>
        <name>Zn(2+)</name>
        <dbReference type="ChEBI" id="CHEBI:29105"/>
        <label>6</label>
    </ligand>
</feature>
<feature type="binding site" evidence="5">
    <location>
        <position position="2277"/>
    </location>
    <ligand>
        <name>Zn(2+)</name>
        <dbReference type="ChEBI" id="CHEBI:29105"/>
        <label>6</label>
    </ligand>
</feature>
<feature type="binding site" evidence="5">
    <location>
        <position position="2283"/>
    </location>
    <ligand>
        <name>Zn(2+)</name>
        <dbReference type="ChEBI" id="CHEBI:29105"/>
        <label>6</label>
    </ligand>
</feature>
<feature type="modified residue" description="Phosphoserine" evidence="1">
    <location>
        <position position="978"/>
    </location>
</feature>
<feature type="modified residue" description="Phosphoserine" evidence="1">
    <location>
        <position position="1459"/>
    </location>
</feature>
<feature type="modified residue" description="Phosphoserine" evidence="1">
    <location>
        <position position="2440"/>
    </location>
</feature>
<feature type="cross-link" description="Glycyl lysine isopeptide (Lys-Gly) (interchain with G-Cter in ubiquitin)" evidence="1">
    <location>
        <position position="87"/>
    </location>
</feature>
<feature type="cross-link" description="Glycyl lysine isopeptide (Lys-Gly) (interchain with G-Cter in NEDD8)" evidence="1">
    <location>
        <position position="1884"/>
    </location>
</feature>
<feature type="sequence conflict" description="In Ref. 4; BAC65633." evidence="10" ref="4">
    <original>FGDQTLHVSTVQMWLLLN</original>
    <variation>LG</variation>
    <location>
        <begin position="1767"/>
        <end position="1784"/>
    </location>
</feature>
<feature type="sequence conflict" description="In Ref. 4; BAC65633." evidence="10" ref="4">
    <original>V</original>
    <variation>F</variation>
    <location>
        <position position="1848"/>
    </location>
</feature>
<evidence type="ECO:0000250" key="1">
    <source>
        <dbReference type="UniProtKB" id="Q8IWT3"/>
    </source>
</evidence>
<evidence type="ECO:0000255" key="2"/>
<evidence type="ECO:0000255" key="3">
    <source>
        <dbReference type="PROSITE-ProRule" id="PRU00330"/>
    </source>
</evidence>
<evidence type="ECO:0000255" key="4">
    <source>
        <dbReference type="PROSITE-ProRule" id="PRU00614"/>
    </source>
</evidence>
<evidence type="ECO:0000255" key="5">
    <source>
        <dbReference type="PROSITE-ProRule" id="PRU01221"/>
    </source>
</evidence>
<evidence type="ECO:0000256" key="6">
    <source>
        <dbReference type="SAM" id="MobiDB-lite"/>
    </source>
</evidence>
<evidence type="ECO:0000269" key="7">
    <source>
    </source>
</evidence>
<evidence type="ECO:0000269" key="8">
    <source>
    </source>
</evidence>
<evidence type="ECO:0000269" key="9">
    <source>
    </source>
</evidence>
<evidence type="ECO:0000305" key="10"/>
<gene>
    <name type="primary">Cul9</name>
    <name type="synonym">Kiaa0708</name>
    <name type="synonym">Parc</name>
</gene>
<sequence>MVGERRAGNLLVPLGPRLQAYPEELLRQRPGHDGHPEYLIRWSVLKCSEEGKVSSEEEKTEHLLMWLSAPEVYANCPMLLRERPIPKGPQHEPAGEVGSFPRDPGGLDELAMTEMEADVRALVRRAARQLAEGGTSSLTAAVLHTVHVLSAYASIGPLTGVFRETGALDLLMHMLCNPEPQIRRSAGKMLQALAAHDAGSRAHVLLSLSQHDGIEQHMDFDSRYTLLELFAETTSTEEHCMALEGIHLPQIPGKLLFSLVKRYLCVTSLLDQLNNSPESGAGDQSSPCLTKEKSRAQQELEFSMAVGNLISELVRSMGWARNLSEQGALPPRPSRSIFQPCLSGPPPLLLPTIVTTPRKQGRAFRGRSEFSSRSGYGEYVQQTVQPGMRVRILDDYEEISAGDEGEFQQSNNGVPPVQVFWQSTGRTYWVHWHMLEILGPEEATGDSASAAVEKGAGAAVLGTVCPSWDWKPTHGLYSLPYLQPEPQKNEEESGYLTQAEWWELLFFIKKLDVGEQQPIFQNLHEKLDEEALGEKALGELSVPIEMAEGVLQVLSNRFEGSNLCDLLNSRIYTKYGLLPKELGSLPSSRRHSCSPEPEEGSRSAANFSEKEEACRANAVPPEAEMELASAKTEPPKAQSDSQLFNQLLVTEGMTLPPETQEAATEMARALRGPGPRSSLDQHVAAVLATVQISSLDTNLQLSGLCALSQAVEEVTERDHPLVRPDRPLREKLVKTLVDLLTNQVGEKMVVVMALRLLYLLMTKHEWRPLFAREGGIYAVLICMQEYKTSVLVQQAGLAALKMLAIANSSDVPTFIPSRDSIQPLFDTQMTREIFASIDSATRPGSESLLLSVPAAVVLMLNTEGCSSAVRNGLLLLNLLLCNHHTLGDQIITQELRDTLFRHSGIAPGTEPMPTTRTILTMLLSRYSEPRGSPERAVLETPSTQGQDGSPESLIRSLVGDLSAELFLDLERVLCHEGSPPAAVRPLLRRLQQETQPFLLLLRTLDAPGPNRTLLLTILRVMTRLLDHPETMVLPWHEVLEPCLNCLNGPSSDSEVVQEVTCFLHRLALMQKDYAVVLCCLGGKEALSKVLDKHSTQLLLASELRHLVAECEKYSQLCSNLTSSILAGCIQMVLGQIEDHRRTYKPITIPFFDVFLRHLCQGSSVEVKEDRCWEKVEVSSNPHRASKLTDRNPKTYWESNGSTGSHSITLHMHRGVLIRQLTLLVASEDSSYMPARVVVFGGDNVGCISTELNTVNVMPSASRVTLLENLTRFWPIIQIRIKRCQQGGIDTRVRGVEVLGPKPTFWPLFREQLCRRTCLFYTIRAQAWSRDIAEDRQRLLQLYPRLNRVLRHEQNFADRFLPDDEAAQALGKTCWEALVSPLVQNITSPDAGGVSSLGWLLDQYLEHRESTRSRQGPAASFASQVRRLCHLLVHVEAPPGPSPEPSSQPLSKNSKGQDGSPTPAPTPVCPSTSLRNLTQCWLSVVQGQVSRFLAAAWRASDFVPRYCSLYQRLQSAGSELFGPRAAFTLALRSGFSGALLQQSFLTAAHISEQFARHIDQQIHGGLLGGAAGVGMLGRLQRHLEPIMVLSGLELATTFEHFYQHYMADRLLSLGSSWLEGAVLEQIGPCFPNRLPQLMLQSLHTSEELQHRFHLFQLQQLDRQLLEQGDQEEWRPEKVEEDDEGQETGRELFTDPGPAISVLVLSPRCWPVSPLCYLHHPRKHLQAELCDALERFSSFYSHSQNCPVLDIGPHRRLQWTWLGRAELQFGDQTLHVSTVQMWLLLNFNQSEEVSVETLLRNSDLSPELLHQALLPLTSDNGPLTLEETQDYPQGGVLRLREPRSQTHEEVLWLIPPQTYLSVEKDEGRTLEQKRNLLSCLLVRILKAHREKGLHIDQLVCLVLEAWQKGPDPPGRLGNAAAVGVACSSTDVLSCILHLLGQGYVERRDDRPQVLMYATPEPMGPCRGQADVPFCGNKNTETSRPSPEAVVALASLQLPAGRTMSPQEVEGLMEQTVRQVQETLNLEPDVAQHLLAHSHWGTEQLLQSYSDDPEPLLLAAGLRVPQAQVVPTRPDQCPVCVTPLGPHDDSPSLCCLHCCCKSCWNEYLTTRIEQNFVLNCTCPIADCPAQPTGAFIRNIVSSPEVISKYEKALLRGYVESCSNLTWCTNPQGCDRILCRQGLGSGTTCSKCGWASCFSCSFPEAHYPASCGHMSQWVDDGGYYDGMSVEAQSKHLAKLISKRCPSCQAPIEKNEGCLHMTCARCNHGFCWRCLKSWKPSHKDYYNCSAMVSKAARQEKRFQDYNERCTFHHQAREFAVNLRNQASAIQEVPPPKSFTFLQDACRALEQARKVLAYACVYSFYSQDTEYMDVVEQQTENLELHTNALQILLEETLLRCRDLASSLRFLRADCLSTGTELLRRIQERLLAILQHSTQDFRVGLQSPSVETREVKGSNVPSDQPQGSSGLEVEDEEEEEEEEEEEEEEEEEDVPEWQHEFDEELDNDSFSYDEESENLDRETFFFGDEDEDDESYD</sequence>
<comment type="function">
    <text evidence="1 9">Core component of the Cul9-RING ubiquitin-protein ligase complex composed of CUL9 and RBX1 (By similarity). The CUL9-RBX1 complex mediates ubiquitination and subsequent degradation of BIRC5 and is required to maintain microtubule dynamics and genome integrity. Acts downstream of the 3M complex, which inhibits CUL9 activity and the ubiquitination of BIRC5 (PubMed:24793696). The CUL9-RBX1 complex also mediates mono-ubiquitination of p53/TP53 (By similarity). Acts as a cytoplasmic anchor protein in p53/TP53-associated protein complex. Regulates the subcellular localization of p53/TP53 and its subsequent function (By similarity). Ubiquitinates apurinic/apyrimidinic endodeoxyribonuclease APEX2 (By similarity). Ubiquitination by the CUL9-RBX1 complex is predominantly mediated by E2 ubiquitin-conjugating enzymes UBE2L3 and UBE2D2 (By similarity).</text>
</comment>
<comment type="subunit">
    <text evidence="1">Component of a Cul9-RING complex consisting of CUL9 and RBX1; the CUL9-RBX1 complex is a heterododecamer composed of six CUL9 and six RBX1 protomers (By similarity). Interacts (via C-terminal TRIAD/RBR supradomain) with E2 ubiquitin-conjugating enzyme UBE2L3 (By similarity). Interacts with CUL7; the interaction with the CUL7 component of the 3M complex leads to inhibition of CUL9 activity. The CUL7-CUL9 heterodimer seems to interact specifically with TP53, likely via the CPH domain (By similarity). Forms a complex with p53/TP53 in the cytoplasm of unstressed cells. Interacts with UBCH7 and UBCH8 (By similarity).</text>
</comment>
<comment type="subcellular location">
    <subcellularLocation>
        <location evidence="8">Cytoplasm</location>
    </subcellularLocation>
</comment>
<comment type="domain">
    <text evidence="1">The C-terminal TRIAD/RBR supradomain is essential for ubiquitination activity.</text>
</comment>
<comment type="domain">
    <text evidence="1">The IBR domain is required for interaction with UBCH7 and UBCH8.</text>
</comment>
<comment type="domain">
    <text evidence="1">The CPH and RING1 domains are necessary for ubiquitination of TP53 by the CUL9-RBX1 complex.</text>
</comment>
<comment type="domain">
    <text evidence="1">The DOC domain is necessary for ubiquitination of APEX2 by the CUL9-RBX1 complex.</text>
</comment>
<comment type="PTM">
    <text evidence="1">Autoubiquitinated by the CUL9-RBX1 complex at Lys-87.</text>
</comment>
<comment type="PTM">
    <text evidence="1">Neddylated (By similarity). Neddylation is mediated by E1 enzyme UBA3-NAE1 complex and E2 enzyme UBE2F (By similarity). Structural rearrangment of the C-terminal TRIAD/RBR supradomain may play a role in neddylation and deneddylation (By similarity).</text>
</comment>
<comment type="disruption phenotype">
    <text evidence="7 8 9">Mice were born at the expected Mendelian ratio and do not show apparent phenotype. They are however more susceptible to carcinogenesis and develop spontaneous tumor. Cells display polyploidy and aneuploidy.</text>
</comment>
<comment type="similarity">
    <text evidence="3">Belongs to the cullin family.</text>
</comment>
<comment type="sequence caution" evidence="10">
    <conflict type="miscellaneous discrepancy">
        <sequence resource="EMBL-CDS" id="AAH26469"/>
    </conflict>
    <text>Probable cloning artifact.</text>
</comment>
<comment type="sequence caution" evidence="10">
    <conflict type="miscellaneous discrepancy">
        <sequence resource="EMBL-CDS" id="AAH41674"/>
    </conflict>
    <text>Probable cloning artifact.</text>
</comment>
<comment type="sequence caution" evidence="10">
    <conflict type="frameshift">
        <sequence resource="EMBL" id="AK051474"/>
    </conflict>
</comment>
<name>CUL9_MOUSE</name>
<reference key="1">
    <citation type="journal article" date="2009" name="PLoS Biol.">
        <title>Lineage-specific biology revealed by a finished genome assembly of the mouse.</title>
        <authorList>
            <person name="Church D.M."/>
            <person name="Goodstadt L."/>
            <person name="Hillier L.W."/>
            <person name="Zody M.C."/>
            <person name="Goldstein S."/>
            <person name="She X."/>
            <person name="Bult C.J."/>
            <person name="Agarwala R."/>
            <person name="Cherry J.L."/>
            <person name="DiCuccio M."/>
            <person name="Hlavina W."/>
            <person name="Kapustin Y."/>
            <person name="Meric P."/>
            <person name="Maglott D."/>
            <person name="Birtle Z."/>
            <person name="Marques A.C."/>
            <person name="Graves T."/>
            <person name="Zhou S."/>
            <person name="Teague B."/>
            <person name="Potamousis K."/>
            <person name="Churas C."/>
            <person name="Place M."/>
            <person name="Herschleb J."/>
            <person name="Runnheim R."/>
            <person name="Forrest D."/>
            <person name="Amos-Landgraf J."/>
            <person name="Schwartz D.C."/>
            <person name="Cheng Z."/>
            <person name="Lindblad-Toh K."/>
            <person name="Eichler E.E."/>
            <person name="Ponting C.P."/>
        </authorList>
    </citation>
    <scope>NUCLEOTIDE SEQUENCE [LARGE SCALE GENOMIC DNA]</scope>
    <source>
        <strain>C57BL/6J</strain>
    </source>
</reference>
<reference key="2">
    <citation type="journal article" date="2005" name="Science">
        <title>The transcriptional landscape of the mammalian genome.</title>
        <authorList>
            <person name="Carninci P."/>
            <person name="Kasukawa T."/>
            <person name="Katayama S."/>
            <person name="Gough J."/>
            <person name="Frith M.C."/>
            <person name="Maeda N."/>
            <person name="Oyama R."/>
            <person name="Ravasi T."/>
            <person name="Lenhard B."/>
            <person name="Wells C."/>
            <person name="Kodzius R."/>
            <person name="Shimokawa K."/>
            <person name="Bajic V.B."/>
            <person name="Brenner S.E."/>
            <person name="Batalov S."/>
            <person name="Forrest A.R."/>
            <person name="Zavolan M."/>
            <person name="Davis M.J."/>
            <person name="Wilming L.G."/>
            <person name="Aidinis V."/>
            <person name="Allen J.E."/>
            <person name="Ambesi-Impiombato A."/>
            <person name="Apweiler R."/>
            <person name="Aturaliya R.N."/>
            <person name="Bailey T.L."/>
            <person name="Bansal M."/>
            <person name="Baxter L."/>
            <person name="Beisel K.W."/>
            <person name="Bersano T."/>
            <person name="Bono H."/>
            <person name="Chalk A.M."/>
            <person name="Chiu K.P."/>
            <person name="Choudhary V."/>
            <person name="Christoffels A."/>
            <person name="Clutterbuck D.R."/>
            <person name="Crowe M.L."/>
            <person name="Dalla E."/>
            <person name="Dalrymple B.P."/>
            <person name="de Bono B."/>
            <person name="Della Gatta G."/>
            <person name="di Bernardo D."/>
            <person name="Down T."/>
            <person name="Engstrom P."/>
            <person name="Fagiolini M."/>
            <person name="Faulkner G."/>
            <person name="Fletcher C.F."/>
            <person name="Fukushima T."/>
            <person name="Furuno M."/>
            <person name="Futaki S."/>
            <person name="Gariboldi M."/>
            <person name="Georgii-Hemming P."/>
            <person name="Gingeras T.R."/>
            <person name="Gojobori T."/>
            <person name="Green R.E."/>
            <person name="Gustincich S."/>
            <person name="Harbers M."/>
            <person name="Hayashi Y."/>
            <person name="Hensch T.K."/>
            <person name="Hirokawa N."/>
            <person name="Hill D."/>
            <person name="Huminiecki L."/>
            <person name="Iacono M."/>
            <person name="Ikeo K."/>
            <person name="Iwama A."/>
            <person name="Ishikawa T."/>
            <person name="Jakt M."/>
            <person name="Kanapin A."/>
            <person name="Katoh M."/>
            <person name="Kawasawa Y."/>
            <person name="Kelso J."/>
            <person name="Kitamura H."/>
            <person name="Kitano H."/>
            <person name="Kollias G."/>
            <person name="Krishnan S.P."/>
            <person name="Kruger A."/>
            <person name="Kummerfeld S.K."/>
            <person name="Kurochkin I.V."/>
            <person name="Lareau L.F."/>
            <person name="Lazarevic D."/>
            <person name="Lipovich L."/>
            <person name="Liu J."/>
            <person name="Liuni S."/>
            <person name="McWilliam S."/>
            <person name="Madan Babu M."/>
            <person name="Madera M."/>
            <person name="Marchionni L."/>
            <person name="Matsuda H."/>
            <person name="Matsuzawa S."/>
            <person name="Miki H."/>
            <person name="Mignone F."/>
            <person name="Miyake S."/>
            <person name="Morris K."/>
            <person name="Mottagui-Tabar S."/>
            <person name="Mulder N."/>
            <person name="Nakano N."/>
            <person name="Nakauchi H."/>
            <person name="Ng P."/>
            <person name="Nilsson R."/>
            <person name="Nishiguchi S."/>
            <person name="Nishikawa S."/>
            <person name="Nori F."/>
            <person name="Ohara O."/>
            <person name="Okazaki Y."/>
            <person name="Orlando V."/>
            <person name="Pang K.C."/>
            <person name="Pavan W.J."/>
            <person name="Pavesi G."/>
            <person name="Pesole G."/>
            <person name="Petrovsky N."/>
            <person name="Piazza S."/>
            <person name="Reed J."/>
            <person name="Reid J.F."/>
            <person name="Ring B.Z."/>
            <person name="Ringwald M."/>
            <person name="Rost B."/>
            <person name="Ruan Y."/>
            <person name="Salzberg S.L."/>
            <person name="Sandelin A."/>
            <person name="Schneider C."/>
            <person name="Schoenbach C."/>
            <person name="Sekiguchi K."/>
            <person name="Semple C.A."/>
            <person name="Seno S."/>
            <person name="Sessa L."/>
            <person name="Sheng Y."/>
            <person name="Shibata Y."/>
            <person name="Shimada H."/>
            <person name="Shimada K."/>
            <person name="Silva D."/>
            <person name="Sinclair B."/>
            <person name="Sperling S."/>
            <person name="Stupka E."/>
            <person name="Sugiura K."/>
            <person name="Sultana R."/>
            <person name="Takenaka Y."/>
            <person name="Taki K."/>
            <person name="Tammoja K."/>
            <person name="Tan S.L."/>
            <person name="Tang S."/>
            <person name="Taylor M.S."/>
            <person name="Tegner J."/>
            <person name="Teichmann S.A."/>
            <person name="Ueda H.R."/>
            <person name="van Nimwegen E."/>
            <person name="Verardo R."/>
            <person name="Wei C.L."/>
            <person name="Yagi K."/>
            <person name="Yamanishi H."/>
            <person name="Zabarovsky E."/>
            <person name="Zhu S."/>
            <person name="Zimmer A."/>
            <person name="Hide W."/>
            <person name="Bult C."/>
            <person name="Grimmond S.M."/>
            <person name="Teasdale R.D."/>
            <person name="Liu E.T."/>
            <person name="Brusic V."/>
            <person name="Quackenbush J."/>
            <person name="Wahlestedt C."/>
            <person name="Mattick J.S."/>
            <person name="Hume D.A."/>
            <person name="Kai C."/>
            <person name="Sasaki D."/>
            <person name="Tomaru Y."/>
            <person name="Fukuda S."/>
            <person name="Kanamori-Katayama M."/>
            <person name="Suzuki M."/>
            <person name="Aoki J."/>
            <person name="Arakawa T."/>
            <person name="Iida J."/>
            <person name="Imamura K."/>
            <person name="Itoh M."/>
            <person name="Kato T."/>
            <person name="Kawaji H."/>
            <person name="Kawagashira N."/>
            <person name="Kawashima T."/>
            <person name="Kojima M."/>
            <person name="Kondo S."/>
            <person name="Konno H."/>
            <person name="Nakano K."/>
            <person name="Ninomiya N."/>
            <person name="Nishio T."/>
            <person name="Okada M."/>
            <person name="Plessy C."/>
            <person name="Shibata K."/>
            <person name="Shiraki T."/>
            <person name="Suzuki S."/>
            <person name="Tagami M."/>
            <person name="Waki K."/>
            <person name="Watahiki A."/>
            <person name="Okamura-Oho Y."/>
            <person name="Suzuki H."/>
            <person name="Kawai J."/>
            <person name="Hayashizaki Y."/>
        </authorList>
    </citation>
    <scope>NUCLEOTIDE SEQUENCE [LARGE SCALE MRNA] OF 1549-2530</scope>
    <source>
        <strain>C57BL/6J</strain>
        <tissue>Cerebellum</tissue>
        <tissue>Spinal ganglion</tissue>
    </source>
</reference>
<reference key="3">
    <citation type="journal article" date="2004" name="Genome Res.">
        <title>The status, quality, and expansion of the NIH full-length cDNA project: the Mammalian Gene Collection (MGC).</title>
        <authorList>
            <consortium name="The MGC Project Team"/>
        </authorList>
    </citation>
    <scope>NUCLEOTIDE SEQUENCE [LARGE SCALE MRNA] OF 665-798 AND 1203-1602</scope>
    <source>
        <tissue>Brain</tissue>
        <tissue>Mammary tumor</tissue>
    </source>
</reference>
<reference key="4">
    <citation type="journal article" date="2003" name="DNA Res.">
        <title>Prediction of the coding sequences of mouse homologues of KIAA gene: II. The complete nucleotide sequences of 400 mouse KIAA-homologous cDNAs identified by screening of terminal sequences of cDNA clones randomly sampled from size-fractionated libraries.</title>
        <authorList>
            <person name="Okazaki N."/>
            <person name="Kikuno R."/>
            <person name="Ohara R."/>
            <person name="Inamoto S."/>
            <person name="Aizawa H."/>
            <person name="Yuasa S."/>
            <person name="Nakajima D."/>
            <person name="Nagase T."/>
            <person name="Ohara O."/>
            <person name="Koga H."/>
        </authorList>
    </citation>
    <scope>NUCLEOTIDE SEQUENCE [LARGE SCALE MRNA] OF 767-2530</scope>
    <source>
        <tissue>Brain</tissue>
    </source>
</reference>
<reference key="5">
    <citation type="journal article" date="2005" name="Mol. Cell. Biol.">
        <title>Dimerization of CUL7 and PARC is not required for all CUL7 functions and mouse development.</title>
        <authorList>
            <person name="Skaar J.R."/>
            <person name="Arai T."/>
            <person name="DeCaprio J.A."/>
        </authorList>
    </citation>
    <scope>DISRUPTION PHENOTYPE</scope>
</reference>
<reference key="6">
    <citation type="journal article" date="2010" name="Cell">
        <title>A tissue-specific atlas of mouse protein phosphorylation and expression.</title>
        <authorList>
            <person name="Huttlin E.L."/>
            <person name="Jedrychowski M.P."/>
            <person name="Elias J.E."/>
            <person name="Goswami T."/>
            <person name="Rad R."/>
            <person name="Beausoleil S.A."/>
            <person name="Villen J."/>
            <person name="Haas W."/>
            <person name="Sowa M.E."/>
            <person name="Gygi S.P."/>
        </authorList>
    </citation>
    <scope>IDENTIFICATION BY MASS SPECTROMETRY [LARGE SCALE ANALYSIS]</scope>
    <source>
        <tissue>Brain</tissue>
        <tissue>Heart</tissue>
        <tissue>Testis</tissue>
    </source>
</reference>
<reference key="7">
    <citation type="journal article" date="2011" name="Cancer Res.">
        <title>Cytoplasmic CUL9/PARC ubiquitin ligase is a tumor suppressor and promotes p53-dependent apoptosis.</title>
        <authorList>
            <person name="Pei X.H."/>
            <person name="Bai F."/>
            <person name="Li Z."/>
            <person name="Smith M.D."/>
            <person name="Whitewolf G."/>
            <person name="Jin R."/>
            <person name="Xiong Y."/>
        </authorList>
    </citation>
    <scope>DISRUPTION PHENOTYPE</scope>
    <scope>SUBCELLULAR LOCATION</scope>
</reference>
<reference key="8">
    <citation type="journal article" date="2014" name="Mol. Cell">
        <title>CUL9 mediates the functions of the 3M complex and ubiquitylates survivin to maintain genome integrity.</title>
        <authorList>
            <person name="Li Z."/>
            <person name="Pei X.H."/>
            <person name="Yan J."/>
            <person name="Yan F."/>
            <person name="Cappell K.M."/>
            <person name="Whitehurst A.W."/>
            <person name="Xiong Y."/>
        </authorList>
    </citation>
    <scope>FUNCTION</scope>
    <scope>DISRUPTION PHENOTYPE</scope>
    <scope>INTERACTION WITH RBX1 AND CUL7</scope>
</reference>
<dbReference type="EMBL" id="AK051474">
    <property type="status" value="NOT_ANNOTATED_CDS"/>
    <property type="molecule type" value="mRNA"/>
</dbReference>
<dbReference type="EMBL" id="BC026469">
    <property type="protein sequence ID" value="AAH26469.1"/>
    <property type="status" value="ALT_SEQ"/>
    <property type="molecule type" value="mRNA"/>
</dbReference>
<dbReference type="EMBL" id="BC041674">
    <property type="protein sequence ID" value="AAH41674.1"/>
    <property type="status" value="ALT_SEQ"/>
    <property type="molecule type" value="mRNA"/>
</dbReference>
<dbReference type="EMBL" id="AK122351">
    <property type="protein sequence ID" value="BAC65633.1"/>
    <property type="molecule type" value="Transcribed_RNA"/>
</dbReference>
<dbReference type="CCDS" id="CCDS37636.2"/>
<dbReference type="RefSeq" id="NP_001074804.2">
    <property type="nucleotide sequence ID" value="NM_001081335.2"/>
</dbReference>
<dbReference type="SMR" id="Q80TT8"/>
<dbReference type="FunCoup" id="Q80TT8">
    <property type="interactions" value="454"/>
</dbReference>
<dbReference type="STRING" id="10090.ENSMUSP00000138418"/>
<dbReference type="GlyGen" id="Q80TT8">
    <property type="glycosylation" value="5 sites, 1 N-linked glycan (1 site), 1 O-linked glycan (2 sites)"/>
</dbReference>
<dbReference type="iPTMnet" id="Q80TT8"/>
<dbReference type="PhosphoSitePlus" id="Q80TT8"/>
<dbReference type="PaxDb" id="10090-ENSMUSP00000138418"/>
<dbReference type="PeptideAtlas" id="Q80TT8"/>
<dbReference type="ProteomicsDB" id="347629"/>
<dbReference type="Antibodypedia" id="3078">
    <property type="antibodies" value="162 antibodies from 28 providers"/>
</dbReference>
<dbReference type="Ensembl" id="ENSMUST00000182485.8">
    <property type="protein sequence ID" value="ENSMUSP00000138418.2"/>
    <property type="gene ID" value="ENSMUSG00000040327.17"/>
</dbReference>
<dbReference type="GeneID" id="78309"/>
<dbReference type="KEGG" id="mmu:78309"/>
<dbReference type="UCSC" id="uc008ctb.2">
    <property type="organism name" value="mouse"/>
</dbReference>
<dbReference type="AGR" id="MGI:1925559"/>
<dbReference type="CTD" id="23113"/>
<dbReference type="MGI" id="MGI:1925559">
    <property type="gene designation" value="Cul9"/>
</dbReference>
<dbReference type="VEuPathDB" id="HostDB:ENSMUSG00000040327"/>
<dbReference type="eggNOG" id="KOG1815">
    <property type="taxonomic scope" value="Eukaryota"/>
</dbReference>
<dbReference type="GeneTree" id="ENSGT00940000153954"/>
<dbReference type="InParanoid" id="Q80TT8"/>
<dbReference type="OMA" id="KPWKPNH"/>
<dbReference type="OrthoDB" id="1431934at2759"/>
<dbReference type="PhylomeDB" id="Q80TT8"/>
<dbReference type="BioGRID-ORCS" id="78309">
    <property type="hits" value="3 hits in 78 CRISPR screens"/>
</dbReference>
<dbReference type="ChiTaRS" id="Cul9">
    <property type="organism name" value="mouse"/>
</dbReference>
<dbReference type="PRO" id="PR:Q80TT8"/>
<dbReference type="Proteomes" id="UP000000589">
    <property type="component" value="Chromosome 17"/>
</dbReference>
<dbReference type="RNAct" id="Q80TT8">
    <property type="molecule type" value="Protein"/>
</dbReference>
<dbReference type="Bgee" id="ENSMUSG00000040327">
    <property type="expression patterns" value="Expressed in retinal neural layer and 106 other cell types or tissues"/>
</dbReference>
<dbReference type="GO" id="GO:0031461">
    <property type="term" value="C:cullin-RING ubiquitin ligase complex"/>
    <property type="evidence" value="ECO:0000250"/>
    <property type="project" value="UniProtKB"/>
</dbReference>
<dbReference type="GO" id="GO:0005737">
    <property type="term" value="C:cytoplasm"/>
    <property type="evidence" value="ECO:0007669"/>
    <property type="project" value="UniProtKB-SubCell"/>
</dbReference>
<dbReference type="GO" id="GO:0005524">
    <property type="term" value="F:ATP binding"/>
    <property type="evidence" value="ECO:0007669"/>
    <property type="project" value="UniProtKB-KW"/>
</dbReference>
<dbReference type="GO" id="GO:0016740">
    <property type="term" value="F:transferase activity"/>
    <property type="evidence" value="ECO:0007669"/>
    <property type="project" value="UniProtKB-KW"/>
</dbReference>
<dbReference type="GO" id="GO:0031625">
    <property type="term" value="F:ubiquitin protein ligase binding"/>
    <property type="evidence" value="ECO:0007669"/>
    <property type="project" value="InterPro"/>
</dbReference>
<dbReference type="GO" id="GO:0008270">
    <property type="term" value="F:zinc ion binding"/>
    <property type="evidence" value="ECO:0007669"/>
    <property type="project" value="UniProtKB-KW"/>
</dbReference>
<dbReference type="GO" id="GO:0000226">
    <property type="term" value="P:microtubule cytoskeleton organization"/>
    <property type="evidence" value="ECO:0000250"/>
    <property type="project" value="UniProtKB"/>
</dbReference>
<dbReference type="GO" id="GO:0016567">
    <property type="term" value="P:protein ubiquitination"/>
    <property type="evidence" value="ECO:0000250"/>
    <property type="project" value="UniProtKB"/>
</dbReference>
<dbReference type="GO" id="GO:0007088">
    <property type="term" value="P:regulation of mitotic nuclear division"/>
    <property type="evidence" value="ECO:0000250"/>
    <property type="project" value="UniProtKB"/>
</dbReference>
<dbReference type="GO" id="GO:0006511">
    <property type="term" value="P:ubiquitin-dependent protein catabolic process"/>
    <property type="evidence" value="ECO:0007669"/>
    <property type="project" value="InterPro"/>
</dbReference>
<dbReference type="CDD" id="cd20347">
    <property type="entry name" value="BRcat_RBR_CUL9"/>
    <property type="match status" value="1"/>
</dbReference>
<dbReference type="CDD" id="cd20359">
    <property type="entry name" value="Rcat_RBR_CUL9"/>
    <property type="match status" value="1"/>
</dbReference>
<dbReference type="FunFam" id="1.10.10.10:FF:000207">
    <property type="entry name" value="Cullin 9"/>
    <property type="match status" value="1"/>
</dbReference>
<dbReference type="FunFam" id="1.20.120.1750:FF:000014">
    <property type="entry name" value="Cullin 9"/>
    <property type="match status" value="1"/>
</dbReference>
<dbReference type="FunFam" id="2.60.120.260:FF:000046">
    <property type="entry name" value="Cullin 9"/>
    <property type="match status" value="1"/>
</dbReference>
<dbReference type="FunFam" id="3.30.230.130:FF:000009">
    <property type="entry name" value="Cullin 9"/>
    <property type="match status" value="1"/>
</dbReference>
<dbReference type="Gene3D" id="1.20.120.1750">
    <property type="match status" value="1"/>
</dbReference>
<dbReference type="Gene3D" id="2.30.30.30">
    <property type="match status" value="1"/>
</dbReference>
<dbReference type="Gene3D" id="3.30.230.130">
    <property type="entry name" value="Cullin, Chain C, Domain 2"/>
    <property type="match status" value="1"/>
</dbReference>
<dbReference type="Gene3D" id="2.60.120.260">
    <property type="entry name" value="Galactose-binding domain-like"/>
    <property type="match status" value="1"/>
</dbReference>
<dbReference type="Gene3D" id="1.25.10.10">
    <property type="entry name" value="Leucine-rich Repeat Variant"/>
    <property type="match status" value="2"/>
</dbReference>
<dbReference type="Gene3D" id="1.10.10.10">
    <property type="entry name" value="Winged helix-like DNA-binding domain superfamily/Winged helix DNA-binding domain"/>
    <property type="match status" value="1"/>
</dbReference>
<dbReference type="Gene3D" id="3.30.40.10">
    <property type="entry name" value="Zinc/RING finger domain, C3HC4 (zinc finger)"/>
    <property type="match status" value="1"/>
</dbReference>
<dbReference type="InterPro" id="IPR004939">
    <property type="entry name" value="APC_su10/DOC_dom"/>
</dbReference>
<dbReference type="InterPro" id="IPR011989">
    <property type="entry name" value="ARM-like"/>
</dbReference>
<dbReference type="InterPro" id="IPR016024">
    <property type="entry name" value="ARM-type_fold"/>
</dbReference>
<dbReference type="InterPro" id="IPR056405">
    <property type="entry name" value="ARM_CUL7_CUL9"/>
</dbReference>
<dbReference type="InterPro" id="IPR047561">
    <property type="entry name" value="BRcat_RBR_CUL9"/>
</dbReference>
<dbReference type="InterPro" id="IPR021097">
    <property type="entry name" value="CPH_domain"/>
</dbReference>
<dbReference type="InterPro" id="IPR055486">
    <property type="entry name" value="CUL7/CUL9_N"/>
</dbReference>
<dbReference type="InterPro" id="IPR045093">
    <property type="entry name" value="Cullin"/>
</dbReference>
<dbReference type="InterPro" id="IPR016157">
    <property type="entry name" value="Cullin_CS"/>
</dbReference>
<dbReference type="InterPro" id="IPR016158">
    <property type="entry name" value="Cullin_homology"/>
</dbReference>
<dbReference type="InterPro" id="IPR036317">
    <property type="entry name" value="Cullin_homology_sf"/>
</dbReference>
<dbReference type="InterPro" id="IPR001373">
    <property type="entry name" value="Cullin_N"/>
</dbReference>
<dbReference type="InterPro" id="IPR019559">
    <property type="entry name" value="Cullin_neddylation_domain"/>
</dbReference>
<dbReference type="InterPro" id="IPR008979">
    <property type="entry name" value="Galactose-bd-like_sf"/>
</dbReference>
<dbReference type="InterPro" id="IPR002867">
    <property type="entry name" value="IBR_dom"/>
</dbReference>
<dbReference type="InterPro" id="IPR047560">
    <property type="entry name" value="Rcat_RBR_CUL9"/>
</dbReference>
<dbReference type="InterPro" id="IPR014722">
    <property type="entry name" value="Rib_uL2_dom2"/>
</dbReference>
<dbReference type="InterPro" id="IPR044066">
    <property type="entry name" value="TRIAD_supradom"/>
</dbReference>
<dbReference type="InterPro" id="IPR036388">
    <property type="entry name" value="WH-like_DNA-bd_sf"/>
</dbReference>
<dbReference type="InterPro" id="IPR001841">
    <property type="entry name" value="Znf_RING"/>
</dbReference>
<dbReference type="InterPro" id="IPR013083">
    <property type="entry name" value="Znf_RING/FYVE/PHD"/>
</dbReference>
<dbReference type="InterPro" id="IPR017907">
    <property type="entry name" value="Znf_RING_CS"/>
</dbReference>
<dbReference type="PANTHER" id="PTHR22771">
    <property type="entry name" value="CULLIN AND GALACTOSE-BINDING DOMAIN-CONTAINING"/>
    <property type="match status" value="1"/>
</dbReference>
<dbReference type="PANTHER" id="PTHR22771:SF2">
    <property type="entry name" value="CULLIN-9"/>
    <property type="match status" value="1"/>
</dbReference>
<dbReference type="Pfam" id="PF03256">
    <property type="entry name" value="ANAPC10"/>
    <property type="match status" value="1"/>
</dbReference>
<dbReference type="Pfam" id="PF24742">
    <property type="entry name" value="ARM_CUL7_CUL9"/>
    <property type="match status" value="1"/>
</dbReference>
<dbReference type="Pfam" id="PF11515">
    <property type="entry name" value="Cul7"/>
    <property type="match status" value="1"/>
</dbReference>
<dbReference type="Pfam" id="PF23168">
    <property type="entry name" value="CUL7_CUL9_N"/>
    <property type="match status" value="1"/>
</dbReference>
<dbReference type="Pfam" id="PF00888">
    <property type="entry name" value="Cullin"/>
    <property type="match status" value="1"/>
</dbReference>
<dbReference type="Pfam" id="PF01485">
    <property type="entry name" value="IBR"/>
    <property type="match status" value="1"/>
</dbReference>
<dbReference type="Pfam" id="PF22191">
    <property type="entry name" value="IBR_1"/>
    <property type="match status" value="1"/>
</dbReference>
<dbReference type="SMART" id="SM01337">
    <property type="entry name" value="APC10"/>
    <property type="match status" value="1"/>
</dbReference>
<dbReference type="SMART" id="SM00884">
    <property type="entry name" value="Cullin_Nedd8"/>
    <property type="match status" value="1"/>
</dbReference>
<dbReference type="SMART" id="SM00647">
    <property type="entry name" value="IBR"/>
    <property type="match status" value="2"/>
</dbReference>
<dbReference type="SUPFAM" id="SSF48371">
    <property type="entry name" value="ARM repeat"/>
    <property type="match status" value="1"/>
</dbReference>
<dbReference type="SUPFAM" id="SSF75632">
    <property type="entry name" value="Cullin homology domain"/>
    <property type="match status" value="1"/>
</dbReference>
<dbReference type="SUPFAM" id="SSF49785">
    <property type="entry name" value="Galactose-binding domain-like"/>
    <property type="match status" value="1"/>
</dbReference>
<dbReference type="SUPFAM" id="SSF57850">
    <property type="entry name" value="RING/U-box"/>
    <property type="match status" value="2"/>
</dbReference>
<dbReference type="SUPFAM" id="SSF63748">
    <property type="entry name" value="Tudor/PWWP/MBT"/>
    <property type="match status" value="1"/>
</dbReference>
<dbReference type="PROSITE" id="PS01256">
    <property type="entry name" value="CULLIN_1"/>
    <property type="match status" value="1"/>
</dbReference>
<dbReference type="PROSITE" id="PS50069">
    <property type="entry name" value="CULLIN_2"/>
    <property type="match status" value="1"/>
</dbReference>
<dbReference type="PROSITE" id="PS51284">
    <property type="entry name" value="DOC"/>
    <property type="match status" value="1"/>
</dbReference>
<dbReference type="PROSITE" id="PS51873">
    <property type="entry name" value="TRIAD"/>
    <property type="match status" value="1"/>
</dbReference>
<dbReference type="PROSITE" id="PS00518">
    <property type="entry name" value="ZF_RING_1"/>
    <property type="match status" value="1"/>
</dbReference>
<dbReference type="PROSITE" id="PS50089">
    <property type="entry name" value="ZF_RING_2"/>
    <property type="match status" value="1"/>
</dbReference>
<protein>
    <recommendedName>
        <fullName>Cullin-9</fullName>
        <shortName>CUL-9</shortName>
    </recommendedName>
    <alternativeName>
        <fullName>p53-associated parkin-like cytoplasmic protein</fullName>
    </alternativeName>
</protein>
<keyword id="KW-0067">ATP-binding</keyword>
<keyword id="KW-0175">Coiled coil</keyword>
<keyword id="KW-0963">Cytoplasm</keyword>
<keyword id="KW-1017">Isopeptide bond</keyword>
<keyword id="KW-0479">Metal-binding</keyword>
<keyword id="KW-0547">Nucleotide-binding</keyword>
<keyword id="KW-0597">Phosphoprotein</keyword>
<keyword id="KW-1185">Reference proteome</keyword>
<keyword id="KW-0677">Repeat</keyword>
<keyword id="KW-0808">Transferase</keyword>
<keyword id="KW-0832">Ubl conjugation</keyword>
<keyword id="KW-0833">Ubl conjugation pathway</keyword>
<keyword id="KW-0862">Zinc</keyword>
<keyword id="KW-0863">Zinc-finger</keyword>
<proteinExistence type="evidence at protein level"/>